<accession>Q6C880</accession>
<reference key="1">
    <citation type="journal article" date="2004" name="Nature">
        <title>Genome evolution in yeasts.</title>
        <authorList>
            <person name="Dujon B."/>
            <person name="Sherman D."/>
            <person name="Fischer G."/>
            <person name="Durrens P."/>
            <person name="Casaregola S."/>
            <person name="Lafontaine I."/>
            <person name="de Montigny J."/>
            <person name="Marck C."/>
            <person name="Neuveglise C."/>
            <person name="Talla E."/>
            <person name="Goffard N."/>
            <person name="Frangeul L."/>
            <person name="Aigle M."/>
            <person name="Anthouard V."/>
            <person name="Babour A."/>
            <person name="Barbe V."/>
            <person name="Barnay S."/>
            <person name="Blanchin S."/>
            <person name="Beckerich J.-M."/>
            <person name="Beyne E."/>
            <person name="Bleykasten C."/>
            <person name="Boisrame A."/>
            <person name="Boyer J."/>
            <person name="Cattolico L."/>
            <person name="Confanioleri F."/>
            <person name="de Daruvar A."/>
            <person name="Despons L."/>
            <person name="Fabre E."/>
            <person name="Fairhead C."/>
            <person name="Ferry-Dumazet H."/>
            <person name="Groppi A."/>
            <person name="Hantraye F."/>
            <person name="Hennequin C."/>
            <person name="Jauniaux N."/>
            <person name="Joyet P."/>
            <person name="Kachouri R."/>
            <person name="Kerrest A."/>
            <person name="Koszul R."/>
            <person name="Lemaire M."/>
            <person name="Lesur I."/>
            <person name="Ma L."/>
            <person name="Muller H."/>
            <person name="Nicaud J.-M."/>
            <person name="Nikolski M."/>
            <person name="Oztas S."/>
            <person name="Ozier-Kalogeropoulos O."/>
            <person name="Pellenz S."/>
            <person name="Potier S."/>
            <person name="Richard G.-F."/>
            <person name="Straub M.-L."/>
            <person name="Suleau A."/>
            <person name="Swennen D."/>
            <person name="Tekaia F."/>
            <person name="Wesolowski-Louvel M."/>
            <person name="Westhof E."/>
            <person name="Wirth B."/>
            <person name="Zeniou-Meyer M."/>
            <person name="Zivanovic Y."/>
            <person name="Bolotin-Fukuhara M."/>
            <person name="Thierry A."/>
            <person name="Bouchier C."/>
            <person name="Caudron B."/>
            <person name="Scarpelli C."/>
            <person name="Gaillardin C."/>
            <person name="Weissenbach J."/>
            <person name="Wincker P."/>
            <person name="Souciet J.-L."/>
        </authorList>
    </citation>
    <scope>NUCLEOTIDE SEQUENCE [LARGE SCALE GENOMIC DNA]</scope>
    <source>
        <strain>CLIB 122 / E 150</strain>
    </source>
</reference>
<dbReference type="EMBL" id="CR382130">
    <property type="protein sequence ID" value="CAG81330.1"/>
    <property type="molecule type" value="Genomic_DNA"/>
</dbReference>
<dbReference type="RefSeq" id="XP_503132.1">
    <property type="nucleotide sequence ID" value="XM_503132.1"/>
</dbReference>
<dbReference type="SMR" id="Q6C880"/>
<dbReference type="FunCoup" id="Q6C880">
    <property type="interactions" value="1083"/>
</dbReference>
<dbReference type="STRING" id="284591.Q6C880"/>
<dbReference type="EnsemblFungi" id="CAG81330">
    <property type="protein sequence ID" value="CAG81330"/>
    <property type="gene ID" value="YALI0_D21956g"/>
</dbReference>
<dbReference type="KEGG" id="yli:2910739"/>
<dbReference type="VEuPathDB" id="FungiDB:YALI0_D21956g"/>
<dbReference type="HOGENOM" id="CLU_054453_4_0_1"/>
<dbReference type="InParanoid" id="Q6C880"/>
<dbReference type="OMA" id="FIYWRFF"/>
<dbReference type="OrthoDB" id="2842at4891"/>
<dbReference type="Proteomes" id="UP000001300">
    <property type="component" value="Chromosome D"/>
</dbReference>
<dbReference type="GO" id="GO:0005789">
    <property type="term" value="C:endoplasmic reticulum membrane"/>
    <property type="evidence" value="ECO:0000318"/>
    <property type="project" value="GO_Central"/>
</dbReference>
<dbReference type="GO" id="GO:0012507">
    <property type="term" value="C:ER to Golgi transport vesicle membrane"/>
    <property type="evidence" value="ECO:0000318"/>
    <property type="project" value="GO_Central"/>
</dbReference>
<dbReference type="GO" id="GO:0000139">
    <property type="term" value="C:Golgi membrane"/>
    <property type="evidence" value="ECO:0000318"/>
    <property type="project" value="GO_Central"/>
</dbReference>
<dbReference type="GO" id="GO:0031201">
    <property type="term" value="C:SNARE complex"/>
    <property type="evidence" value="ECO:0000318"/>
    <property type="project" value="GO_Central"/>
</dbReference>
<dbReference type="GO" id="GO:0005484">
    <property type="term" value="F:SNAP receptor activity"/>
    <property type="evidence" value="ECO:0000318"/>
    <property type="project" value="GO_Central"/>
</dbReference>
<dbReference type="GO" id="GO:0006888">
    <property type="term" value="P:endoplasmic reticulum to Golgi vesicle-mediated transport"/>
    <property type="evidence" value="ECO:0000318"/>
    <property type="project" value="GO_Central"/>
</dbReference>
<dbReference type="GO" id="GO:0006886">
    <property type="term" value="P:intracellular protein transport"/>
    <property type="evidence" value="ECO:0007669"/>
    <property type="project" value="EnsemblFungi"/>
</dbReference>
<dbReference type="GO" id="GO:0006890">
    <property type="term" value="P:retrograde vesicle-mediated transport, Golgi to endoplasmic reticulum"/>
    <property type="evidence" value="ECO:0000318"/>
    <property type="project" value="GO_Central"/>
</dbReference>
<dbReference type="GO" id="GO:0048280">
    <property type="term" value="P:vesicle fusion with Golgi apparatus"/>
    <property type="evidence" value="ECO:0000318"/>
    <property type="project" value="GO_Central"/>
</dbReference>
<dbReference type="CDD" id="cd14824">
    <property type="entry name" value="Longin"/>
    <property type="match status" value="1"/>
</dbReference>
<dbReference type="CDD" id="cd15866">
    <property type="entry name" value="R-SNARE_SEC22"/>
    <property type="match status" value="1"/>
</dbReference>
<dbReference type="FunFam" id="1.20.5.110:FF:000115">
    <property type="entry name" value="Protein transport protein SEC22"/>
    <property type="match status" value="1"/>
</dbReference>
<dbReference type="FunFam" id="3.30.450.50:FF:000007">
    <property type="entry name" value="SNARE complex subunit SEC22"/>
    <property type="match status" value="1"/>
</dbReference>
<dbReference type="Gene3D" id="1.20.5.110">
    <property type="match status" value="1"/>
</dbReference>
<dbReference type="Gene3D" id="3.30.450.50">
    <property type="entry name" value="Longin domain"/>
    <property type="match status" value="1"/>
</dbReference>
<dbReference type="InterPro" id="IPR011012">
    <property type="entry name" value="Longin-like_dom_sf"/>
</dbReference>
<dbReference type="InterPro" id="IPR010908">
    <property type="entry name" value="Longin_dom"/>
</dbReference>
<dbReference type="InterPro" id="IPR044565">
    <property type="entry name" value="Sec22"/>
</dbReference>
<dbReference type="InterPro" id="IPR042855">
    <property type="entry name" value="V_SNARE_CC"/>
</dbReference>
<dbReference type="PANTHER" id="PTHR45837">
    <property type="entry name" value="VESICLE-TRAFFICKING PROTEIN SEC22B"/>
    <property type="match status" value="1"/>
</dbReference>
<dbReference type="Pfam" id="PF13774">
    <property type="entry name" value="Longin"/>
    <property type="match status" value="1"/>
</dbReference>
<dbReference type="Pfam" id="PF00957">
    <property type="entry name" value="Synaptobrevin"/>
    <property type="match status" value="1"/>
</dbReference>
<dbReference type="SMART" id="SM01270">
    <property type="entry name" value="Longin"/>
    <property type="match status" value="1"/>
</dbReference>
<dbReference type="SUPFAM" id="SSF58038">
    <property type="entry name" value="SNARE fusion complex"/>
    <property type="match status" value="1"/>
</dbReference>
<dbReference type="SUPFAM" id="SSF64356">
    <property type="entry name" value="SNARE-like"/>
    <property type="match status" value="1"/>
</dbReference>
<dbReference type="PROSITE" id="PS50859">
    <property type="entry name" value="LONGIN"/>
    <property type="match status" value="1"/>
</dbReference>
<dbReference type="PROSITE" id="PS50892">
    <property type="entry name" value="V_SNARE"/>
    <property type="match status" value="1"/>
</dbReference>
<organism>
    <name type="scientific">Yarrowia lipolytica (strain CLIB 122 / E 150)</name>
    <name type="common">Yeast</name>
    <name type="synonym">Candida lipolytica</name>
    <dbReference type="NCBI Taxonomy" id="284591"/>
    <lineage>
        <taxon>Eukaryota</taxon>
        <taxon>Fungi</taxon>
        <taxon>Dikarya</taxon>
        <taxon>Ascomycota</taxon>
        <taxon>Saccharomycotina</taxon>
        <taxon>Dipodascomycetes</taxon>
        <taxon>Dipodascales</taxon>
        <taxon>Dipodascales incertae sedis</taxon>
        <taxon>Yarrowia</taxon>
    </lineage>
</organism>
<comment type="function">
    <text evidence="1">Required for transport from the ER to the Golgi complex.</text>
</comment>
<comment type="subcellular location">
    <subcellularLocation>
        <location evidence="5">Membrane</location>
        <topology evidence="5">Single-pass type IV membrane protein</topology>
    </subcellularLocation>
    <subcellularLocation>
        <location evidence="5">Endoplasmic reticulum membrane</location>
        <topology evidence="5">Single-pass type IV membrane protein</topology>
    </subcellularLocation>
    <subcellularLocation>
        <location evidence="5">Golgi apparatus membrane</location>
        <topology evidence="5">Single-pass type IV membrane protein</topology>
    </subcellularLocation>
</comment>
<comment type="similarity">
    <text evidence="5">Belongs to the synaptobrevin family.</text>
</comment>
<evidence type="ECO:0000250" key="1"/>
<evidence type="ECO:0000255" key="2"/>
<evidence type="ECO:0000255" key="3">
    <source>
        <dbReference type="PROSITE-ProRule" id="PRU00231"/>
    </source>
</evidence>
<evidence type="ECO:0000255" key="4">
    <source>
        <dbReference type="PROSITE-ProRule" id="PRU00290"/>
    </source>
</evidence>
<evidence type="ECO:0000305" key="5"/>
<proteinExistence type="inferred from homology"/>
<sequence length="213" mass="24774">MVLSTLIMRASDGLPLSASVDDGQENLSEQKKQCKLVTQKLSANSADRASIESGNYVIHYLMKDGIVYYCISESSYPRKLAFSYLDELDREFQKSHGQEALKEGVRPYKFVEFDTFMQKTKRVYQDTRATHNLDKLNTELQDVTRVMTKNIEDLLHRGHSLDHMSDLSSNLRTESKKYRRAAQRINWEAMIRQYIPFIGVGLIGLFMLWWMLF</sequence>
<feature type="chain" id="PRO_0000206768" description="Protein transport protein SEC22">
    <location>
        <begin position="1"/>
        <end position="213"/>
    </location>
</feature>
<feature type="topological domain" description="Cytoplasmic" evidence="2">
    <location>
        <begin position="1"/>
        <end position="192"/>
    </location>
</feature>
<feature type="transmembrane region" description="Helical; Anchor for type IV membrane protein" evidence="2">
    <location>
        <begin position="193"/>
        <end position="213"/>
    </location>
</feature>
<feature type="domain" description="Longin" evidence="3">
    <location>
        <begin position="6"/>
        <end position="117"/>
    </location>
</feature>
<feature type="domain" description="v-SNARE coiled-coil homology" evidence="4">
    <location>
        <begin position="132"/>
        <end position="192"/>
    </location>
</feature>
<name>SEC22_YARLI</name>
<gene>
    <name type="primary">SEC22</name>
    <name type="ordered locus">YALI0D21956g</name>
</gene>
<protein>
    <recommendedName>
        <fullName>Protein transport protein SEC22</fullName>
    </recommendedName>
</protein>
<keyword id="KW-0175">Coiled coil</keyword>
<keyword id="KW-0256">Endoplasmic reticulum</keyword>
<keyword id="KW-0931">ER-Golgi transport</keyword>
<keyword id="KW-0333">Golgi apparatus</keyword>
<keyword id="KW-0472">Membrane</keyword>
<keyword id="KW-0653">Protein transport</keyword>
<keyword id="KW-1185">Reference proteome</keyword>
<keyword id="KW-0812">Transmembrane</keyword>
<keyword id="KW-1133">Transmembrane helix</keyword>
<keyword id="KW-0813">Transport</keyword>